<proteinExistence type="inferred from homology"/>
<dbReference type="EC" id="1.14.11.6" evidence="2"/>
<dbReference type="EMBL" id="AAHK01000683">
    <property type="protein sequence ID" value="EAN90000.1"/>
    <property type="molecule type" value="Genomic_DNA"/>
</dbReference>
<dbReference type="RefSeq" id="XP_811851.1">
    <property type="nucleotide sequence ID" value="XM_806758.1"/>
</dbReference>
<dbReference type="SMR" id="Q4DBW3"/>
<dbReference type="PaxDb" id="353153-Q4DBW3"/>
<dbReference type="EnsemblProtists" id="EAN90000">
    <property type="protein sequence ID" value="EAN90000"/>
    <property type="gene ID" value="Tc00.1047053510357.10"/>
</dbReference>
<dbReference type="GeneID" id="3542898"/>
<dbReference type="KEGG" id="tcr:510357.10"/>
<dbReference type="eggNOG" id="ENOG502RTYX">
    <property type="taxonomic scope" value="Eukaryota"/>
</dbReference>
<dbReference type="InParanoid" id="Q4DBW3"/>
<dbReference type="OMA" id="LCEVGKQ"/>
<dbReference type="Proteomes" id="UP000002296">
    <property type="component" value="Unassembled WGS sequence"/>
</dbReference>
<dbReference type="GO" id="GO:0005634">
    <property type="term" value="C:nucleus"/>
    <property type="evidence" value="ECO:0007669"/>
    <property type="project" value="UniProtKB-SubCell"/>
</dbReference>
<dbReference type="GO" id="GO:0003677">
    <property type="term" value="F:DNA binding"/>
    <property type="evidence" value="ECO:0007669"/>
    <property type="project" value="UniProtKB-KW"/>
</dbReference>
<dbReference type="GO" id="GO:0046872">
    <property type="term" value="F:metal ion binding"/>
    <property type="evidence" value="ECO:0007669"/>
    <property type="project" value="UniProtKB-KW"/>
</dbReference>
<dbReference type="GO" id="GO:0050341">
    <property type="term" value="F:thymine dioxygenase activity"/>
    <property type="evidence" value="ECO:0007669"/>
    <property type="project" value="UniProtKB-EC"/>
</dbReference>
<dbReference type="GO" id="GO:0070580">
    <property type="term" value="P:base J metabolic process"/>
    <property type="evidence" value="ECO:0007669"/>
    <property type="project" value="UniProtKB-ARBA"/>
</dbReference>
<dbReference type="Gene3D" id="1.20.120.1440">
    <property type="entry name" value="JBP1, DNA-binding domain"/>
    <property type="match status" value="1"/>
</dbReference>
<dbReference type="InterPro" id="IPR024779">
    <property type="entry name" value="2OGFeDO_JBP1/TET_oxygenase_dom"/>
</dbReference>
<dbReference type="InterPro" id="IPR041241">
    <property type="entry name" value="DB_JBP1"/>
</dbReference>
<dbReference type="InterPro" id="IPR043111">
    <property type="entry name" value="DB_JBP1_sf"/>
</dbReference>
<dbReference type="Pfam" id="PF18526">
    <property type="entry name" value="DB_JBP1"/>
    <property type="match status" value="1"/>
</dbReference>
<dbReference type="Pfam" id="PF12851">
    <property type="entry name" value="Tet_JBP"/>
    <property type="match status" value="1"/>
</dbReference>
<gene>
    <name type="primary">JBP1A</name>
    <name type="ORF">Tc00.1047053510357.10</name>
</gene>
<reference key="1">
    <citation type="journal article" date="2005" name="Science">
        <title>The genome sequence of Trypanosoma cruzi, etiologic agent of Chagas disease.</title>
        <authorList>
            <person name="El-Sayed N.M.A."/>
            <person name="Myler P.J."/>
            <person name="Bartholomeu D.C."/>
            <person name="Nilsson D."/>
            <person name="Aggarwal G."/>
            <person name="Tran A.-N."/>
            <person name="Ghedin E."/>
            <person name="Worthey E.A."/>
            <person name="Delcher A.L."/>
            <person name="Blandin G."/>
            <person name="Westenberger S.J."/>
            <person name="Caler E."/>
            <person name="Cerqueira G.C."/>
            <person name="Branche C."/>
            <person name="Haas B."/>
            <person name="Anupama A."/>
            <person name="Arner E."/>
            <person name="Aslund L."/>
            <person name="Attipoe P."/>
            <person name="Bontempi E."/>
            <person name="Bringaud F."/>
            <person name="Burton P."/>
            <person name="Cadag E."/>
            <person name="Campbell D.A."/>
            <person name="Carrington M."/>
            <person name="Crabtree J."/>
            <person name="Darban H."/>
            <person name="da Silveira J.F."/>
            <person name="de Jong P."/>
            <person name="Edwards K."/>
            <person name="Englund P.T."/>
            <person name="Fazelina G."/>
            <person name="Feldblyum T."/>
            <person name="Ferella M."/>
            <person name="Frasch A.C."/>
            <person name="Gull K."/>
            <person name="Horn D."/>
            <person name="Hou L."/>
            <person name="Huang Y."/>
            <person name="Kindlund E."/>
            <person name="Klingbeil M."/>
            <person name="Kluge S."/>
            <person name="Koo H."/>
            <person name="Lacerda D."/>
            <person name="Levin M.J."/>
            <person name="Lorenzi H."/>
            <person name="Louie T."/>
            <person name="Machado C.R."/>
            <person name="McCulloch R."/>
            <person name="McKenna A."/>
            <person name="Mizuno Y."/>
            <person name="Mottram J.C."/>
            <person name="Nelson S."/>
            <person name="Ochaya S."/>
            <person name="Osoegawa K."/>
            <person name="Pai G."/>
            <person name="Parsons M."/>
            <person name="Pentony M."/>
            <person name="Pettersson U."/>
            <person name="Pop M."/>
            <person name="Ramirez J.L."/>
            <person name="Rinta J."/>
            <person name="Robertson L."/>
            <person name="Salzberg S.L."/>
            <person name="Sanchez D.O."/>
            <person name="Seyler A."/>
            <person name="Sharma R."/>
            <person name="Shetty J."/>
            <person name="Simpson A.J."/>
            <person name="Sisk E."/>
            <person name="Tammi M.T."/>
            <person name="Tarleton R."/>
            <person name="Teixeira S."/>
            <person name="Van Aken S."/>
            <person name="Vogt C."/>
            <person name="Ward P.N."/>
            <person name="Wickstead B."/>
            <person name="Wortman J."/>
            <person name="White O."/>
            <person name="Fraser C.M."/>
            <person name="Stuart K.D."/>
            <person name="Andersson B."/>
        </authorList>
    </citation>
    <scope>NUCLEOTIDE SEQUENCE [LARGE SCALE GENOMIC DNA]</scope>
    <source>
        <strain>CL Brener</strain>
    </source>
</reference>
<feature type="chain" id="PRO_0000377556" description="Thymine dioxygenase JBP1-A">
    <location>
        <begin position="1"/>
        <end position="832"/>
    </location>
</feature>
<feature type="region of interest" description="Disordered" evidence="3">
    <location>
        <begin position="1"/>
        <end position="24"/>
    </location>
</feature>
<feature type="region of interest" description="Thymine dioxygenase" evidence="2">
    <location>
        <begin position="80"/>
        <end position="282"/>
    </location>
</feature>
<feature type="region of interest" description="DNA-binding JBP1 domain" evidence="2">
    <location>
        <begin position="409"/>
        <end position="578"/>
    </location>
</feature>
<feature type="compositionally biased region" description="Basic and acidic residues" evidence="3">
    <location>
        <begin position="1"/>
        <end position="12"/>
    </location>
</feature>
<feature type="binding site" evidence="1">
    <location>
        <position position="207"/>
    </location>
    <ligand>
        <name>Fe cation</name>
        <dbReference type="ChEBI" id="CHEBI:24875"/>
        <note>catalytic</note>
    </ligand>
</feature>
<feature type="binding site" evidence="1">
    <location>
        <position position="209"/>
    </location>
    <ligand>
        <name>Fe cation</name>
        <dbReference type="ChEBI" id="CHEBI:24875"/>
        <note>catalytic</note>
    </ligand>
</feature>
<feature type="binding site" evidence="1">
    <location>
        <position position="257"/>
    </location>
    <ligand>
        <name>Fe cation</name>
        <dbReference type="ChEBI" id="CHEBI:24875"/>
        <note>catalytic</note>
    </ligand>
</feature>
<feature type="binding site" evidence="1">
    <location>
        <position position="273"/>
    </location>
    <ligand>
        <name>2-oxoglutarate</name>
        <dbReference type="ChEBI" id="CHEBI:16810"/>
    </ligand>
</feature>
<feature type="site" description="Involved in J base recognition, conferring specificity towards J-DNA" evidence="2">
    <location>
        <position position="542"/>
    </location>
</feature>
<organism>
    <name type="scientific">Trypanosoma cruzi (strain CL Brener)</name>
    <dbReference type="NCBI Taxonomy" id="353153"/>
    <lineage>
        <taxon>Eukaryota</taxon>
        <taxon>Discoba</taxon>
        <taxon>Euglenozoa</taxon>
        <taxon>Kinetoplastea</taxon>
        <taxon>Metakinetoplastina</taxon>
        <taxon>Trypanosomatida</taxon>
        <taxon>Trypanosomatidae</taxon>
        <taxon>Trypanosoma</taxon>
        <taxon>Schizotrypanum</taxon>
    </lineage>
</organism>
<protein>
    <recommendedName>
        <fullName>Thymine dioxygenase JBP1-A</fullName>
        <ecNumber evidence="2">1.14.11.6</ecNumber>
    </recommendedName>
    <alternativeName>
        <fullName>J-binding protein 1A</fullName>
    </alternativeName>
    <alternativeName>
        <fullName>Thymidine hydroxylase JBP1-A</fullName>
    </alternativeName>
</protein>
<name>JBP1A_TRYCC</name>
<sequence length="832" mass="93816">MKQKRGKQDVKMLESAPPQLLPKKGRLEISELAPQQRTIRTAEEIETAYNEAVRKHPFYDNADHTIDFHDATVFRDARGVVGGVFLPGALPAFAATMAADVLRPAAVRTSLRSNMFGGFAPLSGIAGYFDYRGSPVELKCRKTSFTYENVHSWPNVFPMIDYVSAIYKAVFPEQWAAQDAAVPDIVRIHGSPFSTLTVNQQFRTASHTDAGDFDMGYGLLAVLEGKFEGLSLALDDFGVCFRMQPRDILIFNTHFFHSNTEPELNHPRDDWSRLTCVCYYRAALGEPACVAEYERRLARAKEIGASPPPAVDAILQKDNGNNFNKPAPTFPYLLTPFGGAASVCSLHCCTAKLLRLHELLLENPTLEVILFGESLRTDDGLPRREKEQLISVHLPVVVKMSPSGGFSELGGALKAAEEKQYFFEEKYLADELGPDLMSMWTQSRAHWLRLVKEDWERLCRRDPERTKFTWNNSSAMNAAFFDLCEVAKQMMIGLLNKETPSSAENHSFWILFAAHLNYACTTENGMPRDAVGMHKLNVKLKDFHFGGTRYLKDMPPEEQERRLERKKRIEEARRRGSSAHETHTDNWLLNDTFDYQQEDRKVEFEENGWMTPEAYVKHLGLKPCGDVTAAASPTEPIHVLVVLPRPAAAATAKDAKRDVPLATSEESIRLLMNPAAQRVLRGKARNVALPSPLSFGGVKITVLFDGDDIDCIHPDFVILQHLLATIEEDEAAKARVKYWARVARYCVFVVETDVRDRRHFLLREEVRVAYEDVAEDCFRSLHAAAYSTKYNRLRTTPSLIALCNRKNIGLRFKFRGSPLNTIALVVVGERLD</sequence>
<comment type="function">
    <text evidence="2">Dioxygenase that catalyzes the first step of DNA base J (beta-d-glucosyl-HOMedU) biosynthesis by converting thymine to 5-hydroxymethyluracil (HOMedU). DNA base J is a hypermodified thymidine residue found in the genome of kinetoplastid parasites, which is localized primarily to repetitive DNA, namely the telomeres, and is implicated in the regulation of antigenic variation. Also specifically binds to base J-containing DNA (J-DNA). Involved in propagation and maintenance of DNA base J synthesis initiated by JBP2 by specifically binding already synthesized DNA base J and propagating J synthesis. Thymine dioxygenase activity and J-DNA-binding are independent functions (By similarity).</text>
</comment>
<comment type="catalytic activity">
    <reaction evidence="2">
        <text>thymine + 2-oxoglutarate + O2 = 5-hydroxymethyluracil + succinate + CO2</text>
        <dbReference type="Rhea" id="RHEA:10316"/>
        <dbReference type="ChEBI" id="CHEBI:15379"/>
        <dbReference type="ChEBI" id="CHEBI:16526"/>
        <dbReference type="ChEBI" id="CHEBI:16810"/>
        <dbReference type="ChEBI" id="CHEBI:16964"/>
        <dbReference type="ChEBI" id="CHEBI:17821"/>
        <dbReference type="ChEBI" id="CHEBI:30031"/>
        <dbReference type="EC" id="1.14.11.6"/>
    </reaction>
</comment>
<comment type="cofactor">
    <cofactor evidence="1">
        <name>Fe(2+)</name>
        <dbReference type="ChEBI" id="CHEBI:29033"/>
    </cofactor>
    <text evidence="1">Binds 1 Fe(2+) ion per subunit.</text>
</comment>
<comment type="subunit">
    <text evidence="2">Monomer. Binds to DNA as a monomer (By similarity).</text>
</comment>
<comment type="subcellular location">
    <subcellularLocation>
        <location evidence="2">Nucleus</location>
    </subcellularLocation>
</comment>
<comment type="domain">
    <text evidence="2">The DNA-binding JBP1 domain (DB-JBP1) is necessary and sufficient for binding to J-DNA.</text>
</comment>
<comment type="similarity">
    <text evidence="4">Belongs to the TET family. JBP1 subfamily.</text>
</comment>
<evidence type="ECO:0000250" key="1">
    <source>
        <dbReference type="UniProtKB" id="Q6N021"/>
    </source>
</evidence>
<evidence type="ECO:0000250" key="2">
    <source>
        <dbReference type="UniProtKB" id="Q9U6M1"/>
    </source>
</evidence>
<evidence type="ECO:0000256" key="3">
    <source>
        <dbReference type="SAM" id="MobiDB-lite"/>
    </source>
</evidence>
<evidence type="ECO:0000305" key="4"/>
<accession>Q4DBW3</accession>
<keyword id="KW-0223">Dioxygenase</keyword>
<keyword id="KW-0238">DNA-binding</keyword>
<keyword id="KW-0408">Iron</keyword>
<keyword id="KW-0479">Metal-binding</keyword>
<keyword id="KW-0539">Nucleus</keyword>
<keyword id="KW-0560">Oxidoreductase</keyword>
<keyword id="KW-1185">Reference proteome</keyword>